<gene>
    <name evidence="1" type="primary">fliA</name>
</gene>
<name>FLIA_YEREN</name>
<feature type="chain" id="PRO_0000093987" description="RNA polymerase sigma factor FliA">
    <location>
        <begin position="1"/>
        <end position="230"/>
    </location>
</feature>
<feature type="DNA-binding region" description="H-T-H motif" evidence="1">
    <location>
        <begin position="197"/>
        <end position="216"/>
    </location>
</feature>
<feature type="region of interest" description="Sigma-70 factor domain-2" evidence="1">
    <location>
        <begin position="6"/>
        <end position="78"/>
    </location>
</feature>
<feature type="region of interest" description="Sigma-70 factor domain-3" evidence="1">
    <location>
        <begin position="86"/>
        <end position="156"/>
    </location>
</feature>
<feature type="region of interest" description="Sigma-70 factor domain-4" evidence="1">
    <location>
        <begin position="175"/>
        <end position="223"/>
    </location>
</feature>
<feature type="short sequence motif" description="Interaction with polymerase core subunit RpoC">
    <location>
        <begin position="33"/>
        <end position="36"/>
    </location>
</feature>
<comment type="function">
    <text evidence="1">Sigma factors are initiation factors that promote the attachment of RNA polymerase to specific initiation sites and are then released. This sigma factor controls the expression of flagella-related genes.</text>
</comment>
<comment type="subcellular location">
    <subcellularLocation>
        <location evidence="1">Cytoplasm</location>
    </subcellularLocation>
</comment>
<comment type="similarity">
    <text evidence="1">Belongs to the sigma-70 factor family. FliA subfamily.</text>
</comment>
<accession>P52621</accession>
<keyword id="KW-0963">Cytoplasm</keyword>
<keyword id="KW-0238">DNA-binding</keyword>
<keyword id="KW-0731">Sigma factor</keyword>
<keyword id="KW-0804">Transcription</keyword>
<keyword id="KW-0805">Transcription regulation</keyword>
<evidence type="ECO:0000255" key="1">
    <source>
        <dbReference type="HAMAP-Rule" id="MF_00962"/>
    </source>
</evidence>
<reference key="1">
    <citation type="journal article" date="1995" name="J. Bacteriol.">
        <title>The fliA gene encoding sigma 28 in Yersinia enterocolitica.</title>
        <authorList>
            <person name="Iriarte M."/>
            <person name="Stainier I."/>
            <person name="Mikulskis A."/>
            <person name="Cornelis G.R."/>
        </authorList>
    </citation>
    <scope>NUCLEOTIDE SEQUENCE [GENOMIC DNA]</scope>
    <source>
        <strain>W1024 / Serotype O:9</strain>
    </source>
</reference>
<organism>
    <name type="scientific">Yersinia enterocolitica</name>
    <dbReference type="NCBI Taxonomy" id="630"/>
    <lineage>
        <taxon>Bacteria</taxon>
        <taxon>Pseudomonadati</taxon>
        <taxon>Pseudomonadota</taxon>
        <taxon>Gammaproteobacteria</taxon>
        <taxon>Enterobacterales</taxon>
        <taxon>Yersiniaceae</taxon>
        <taxon>Yersinia</taxon>
    </lineage>
</organism>
<dbReference type="EMBL" id="U17393">
    <property type="protein sequence ID" value="AAC43394.1"/>
    <property type="molecule type" value="Genomic_DNA"/>
</dbReference>
<dbReference type="SMR" id="P52621"/>
<dbReference type="STRING" id="1443113.LC20_02197"/>
<dbReference type="eggNOG" id="COG1191">
    <property type="taxonomic scope" value="Bacteria"/>
</dbReference>
<dbReference type="GO" id="GO:0005737">
    <property type="term" value="C:cytoplasm"/>
    <property type="evidence" value="ECO:0007669"/>
    <property type="project" value="UniProtKB-SubCell"/>
</dbReference>
<dbReference type="GO" id="GO:0003677">
    <property type="term" value="F:DNA binding"/>
    <property type="evidence" value="ECO:0007669"/>
    <property type="project" value="UniProtKB-UniRule"/>
</dbReference>
<dbReference type="GO" id="GO:0003899">
    <property type="term" value="F:DNA-directed RNA polymerase activity"/>
    <property type="evidence" value="ECO:0007669"/>
    <property type="project" value="InterPro"/>
</dbReference>
<dbReference type="GO" id="GO:0016987">
    <property type="term" value="F:sigma factor activity"/>
    <property type="evidence" value="ECO:0007669"/>
    <property type="project" value="UniProtKB-UniRule"/>
</dbReference>
<dbReference type="GO" id="GO:0006352">
    <property type="term" value="P:DNA-templated transcription initiation"/>
    <property type="evidence" value="ECO:0007669"/>
    <property type="project" value="UniProtKB-UniRule"/>
</dbReference>
<dbReference type="CDD" id="cd06171">
    <property type="entry name" value="Sigma70_r4"/>
    <property type="match status" value="1"/>
</dbReference>
<dbReference type="FunFam" id="1.10.1740.10:FF:000002">
    <property type="entry name" value="RNA polymerase sigma factor FliA"/>
    <property type="match status" value="1"/>
</dbReference>
<dbReference type="FunFam" id="1.20.140.160:FF:000001">
    <property type="entry name" value="RNA polymerase sigma factor FliA"/>
    <property type="match status" value="1"/>
</dbReference>
<dbReference type="Gene3D" id="1.10.1740.10">
    <property type="match status" value="1"/>
</dbReference>
<dbReference type="Gene3D" id="1.20.140.160">
    <property type="match status" value="1"/>
</dbReference>
<dbReference type="HAMAP" id="MF_00962">
    <property type="entry name" value="Sigma70_FliA"/>
    <property type="match status" value="1"/>
</dbReference>
<dbReference type="InterPro" id="IPR014284">
    <property type="entry name" value="RNA_pol_sigma-70_dom"/>
</dbReference>
<dbReference type="InterPro" id="IPR000943">
    <property type="entry name" value="RNA_pol_sigma70"/>
</dbReference>
<dbReference type="InterPro" id="IPR007627">
    <property type="entry name" value="RNA_pol_sigma70_r2"/>
</dbReference>
<dbReference type="InterPro" id="IPR007624">
    <property type="entry name" value="RNA_pol_sigma70_r3"/>
</dbReference>
<dbReference type="InterPro" id="IPR007630">
    <property type="entry name" value="RNA_pol_sigma70_r4"/>
</dbReference>
<dbReference type="InterPro" id="IPR012845">
    <property type="entry name" value="RNA_pol_sigma_FliA_WhiG"/>
</dbReference>
<dbReference type="InterPro" id="IPR013325">
    <property type="entry name" value="RNA_pol_sigma_r2"/>
</dbReference>
<dbReference type="InterPro" id="IPR013324">
    <property type="entry name" value="RNA_pol_sigma_r3/r4-like"/>
</dbReference>
<dbReference type="InterPro" id="IPR028617">
    <property type="entry name" value="Sigma70_FliA"/>
</dbReference>
<dbReference type="NCBIfam" id="TIGR02479">
    <property type="entry name" value="FliA_WhiG"/>
    <property type="match status" value="1"/>
</dbReference>
<dbReference type="NCBIfam" id="NF005413">
    <property type="entry name" value="PRK06986.1"/>
    <property type="match status" value="1"/>
</dbReference>
<dbReference type="NCBIfam" id="TIGR02937">
    <property type="entry name" value="sigma70-ECF"/>
    <property type="match status" value="1"/>
</dbReference>
<dbReference type="PANTHER" id="PTHR30385:SF7">
    <property type="entry name" value="RNA POLYMERASE SIGMA FACTOR FLIA"/>
    <property type="match status" value="1"/>
</dbReference>
<dbReference type="PANTHER" id="PTHR30385">
    <property type="entry name" value="SIGMA FACTOR F FLAGELLAR"/>
    <property type="match status" value="1"/>
</dbReference>
<dbReference type="Pfam" id="PF04542">
    <property type="entry name" value="Sigma70_r2"/>
    <property type="match status" value="1"/>
</dbReference>
<dbReference type="Pfam" id="PF04539">
    <property type="entry name" value="Sigma70_r3"/>
    <property type="match status" value="1"/>
</dbReference>
<dbReference type="Pfam" id="PF04545">
    <property type="entry name" value="Sigma70_r4"/>
    <property type="match status" value="1"/>
</dbReference>
<dbReference type="PIRSF" id="PIRSF000770">
    <property type="entry name" value="RNA_pol_sigma-SigE/K"/>
    <property type="match status" value="1"/>
</dbReference>
<dbReference type="PRINTS" id="PR00046">
    <property type="entry name" value="SIGMA70FCT"/>
</dbReference>
<dbReference type="SUPFAM" id="SSF88946">
    <property type="entry name" value="Sigma2 domain of RNA polymerase sigma factors"/>
    <property type="match status" value="1"/>
</dbReference>
<dbReference type="SUPFAM" id="SSF88659">
    <property type="entry name" value="Sigma3 and sigma4 domains of RNA polymerase sigma factors"/>
    <property type="match status" value="2"/>
</dbReference>
<dbReference type="PROSITE" id="PS00715">
    <property type="entry name" value="SIGMA70_1"/>
    <property type="match status" value="1"/>
</dbReference>
<dbReference type="PROSITE" id="PS00716">
    <property type="entry name" value="SIGMA70_2"/>
    <property type="match status" value="1"/>
</dbReference>
<sequence>MDKNSLWQRYVPLVRHEALRLQVRLPASVELDDLLQAGGIGLLNAVERYDRLQGTAFTTYAVQRIRGAMLDELRSRDWAPRSVRRNAREVASAMQKVEQRLGRPATEQEVAQNLDIDLTEYRQILLDTNNSQLFSYDEWREEHGESVEPMLEGHEDANPLQHLLEGNLRQRVIEAIEALPEREKMVLTLYYQEELNLKEIGAVLEVGESRVSQLHSQAIKRLRARLNNDS</sequence>
<proteinExistence type="inferred from homology"/>
<protein>
    <recommendedName>
        <fullName evidence="1">RNA polymerase sigma factor FliA</fullName>
    </recommendedName>
    <alternativeName>
        <fullName evidence="1">RNA polymerase sigma factor for flagellar operon</fullName>
    </alternativeName>
    <alternativeName>
        <fullName evidence="1">Sigma F</fullName>
    </alternativeName>
    <alternativeName>
        <fullName evidence="1">Sigma-28</fullName>
    </alternativeName>
</protein>